<feature type="chain" id="PRO_0000448188" description="Protein OPG060">
    <location>
        <begin position="1"/>
        <end position="161"/>
    </location>
</feature>
<protein>
    <recommendedName>
        <fullName>Protein OPG060</fullName>
    </recommendedName>
</protein>
<keyword id="KW-0244">Early protein</keyword>
<name>PG060_VARV</name>
<gene>
    <name type="primary">OPG060</name>
    <name type="ORF">C19L</name>
</gene>
<proteinExistence type="inferred from homology"/>
<dbReference type="EMBL" id="L22579">
    <property type="protein sequence ID" value="AAA60787.1"/>
    <property type="molecule type" value="Genomic_DNA"/>
</dbReference>
<dbReference type="PIR" id="T28477">
    <property type="entry name" value="T28477"/>
</dbReference>
<dbReference type="RefSeq" id="NP_042083.1">
    <property type="nucleotide sequence ID" value="NC_001611.1"/>
</dbReference>
<dbReference type="GeneID" id="1486575"/>
<dbReference type="KEGG" id="vg:1486575"/>
<dbReference type="Proteomes" id="UP000119805">
    <property type="component" value="Segment"/>
</dbReference>
<dbReference type="InterPro" id="IPR007675">
    <property type="entry name" value="Poxvirus_F15"/>
</dbReference>
<dbReference type="Pfam" id="PF04596">
    <property type="entry name" value="Pox_F15"/>
    <property type="match status" value="1"/>
</dbReference>
<dbReference type="PIRSF" id="PIRSF015694">
    <property type="entry name" value="VAC_F15L"/>
    <property type="match status" value="1"/>
</dbReference>
<comment type="induction">
    <text evidence="1">Expressed in the early phase of the viral replicative cycle.</text>
</comment>
<comment type="similarity">
    <text evidence="2">Belongs to the orthopoxvirus OPG058 family.</text>
</comment>
<organism>
    <name type="scientific">Variola virus</name>
    <dbReference type="NCBI Taxonomy" id="10255"/>
    <lineage>
        <taxon>Viruses</taxon>
        <taxon>Varidnaviria</taxon>
        <taxon>Bamfordvirae</taxon>
        <taxon>Nucleocytoviricota</taxon>
        <taxon>Pokkesviricetes</taxon>
        <taxon>Chitovirales</taxon>
        <taxon>Poxviridae</taxon>
        <taxon>Chordopoxvirinae</taxon>
        <taxon>Orthopoxvirus</taxon>
    </lineage>
</organism>
<organismHost>
    <name type="scientific">Homo sapiens</name>
    <name type="common">Human</name>
    <dbReference type="NCBI Taxonomy" id="9606"/>
</organismHost>
<reference key="1">
    <citation type="journal article" date="1993" name="Nature">
        <title>Potential virulence determinants in terminal regions of variola smallpox virus genome.</title>
        <authorList>
            <person name="Massung R.F."/>
            <person name="Esposito J.J."/>
            <person name="Liu L.I."/>
            <person name="Qi J."/>
            <person name="Utterback T.R."/>
            <person name="Knight J.C."/>
            <person name="Aubin L."/>
            <person name="Yuran T.E."/>
            <person name="Parsons J.M."/>
            <person name="Loparev V.N."/>
            <person name="Selivanov N.A."/>
            <person name="Cavallaro K.F."/>
            <person name="Kerlavage A.R."/>
            <person name="Mahy B.W.J."/>
            <person name="Venter J.C."/>
        </authorList>
    </citation>
    <scope>NUCLEOTIDE SEQUENCE [GENOMIC DNA]</scope>
    <source>
        <strain>Bangladesh-1975</strain>
    </source>
</reference>
<sequence length="161" mass="19092">MKRNEEYCGLHKLKMEIFNVEELINMKPFKNMNKITINQKDNCILANRCFVKIDTPRYIPLTSISSSNIIRIRNHDFTLSELLYSPFHFQQPQFQYLLPGFVLTCIDKVSKQQKECKYCISNRGDDDSLSINLFIPTINKSIYIIIGLRMKNFWKPKFEIE</sequence>
<evidence type="ECO:0000250" key="1">
    <source>
        <dbReference type="UniProtKB" id="Q80HX4"/>
    </source>
</evidence>
<evidence type="ECO:0000305" key="2"/>
<accession>P0DOR8</accession>
<accession>P33873</accession>